<keyword id="KW-0963">Cytoplasm</keyword>
<keyword id="KW-0224">Dipeptidase</keyword>
<keyword id="KW-0378">Hydrolase</keyword>
<keyword id="KW-0645">Protease</keyword>
<keyword id="KW-0720">Serine protease</keyword>
<dbReference type="EC" id="3.4.13.21" evidence="1"/>
<dbReference type="EMBL" id="CP000891">
    <property type="protein sequence ID" value="ABX49841.1"/>
    <property type="molecule type" value="Genomic_DNA"/>
</dbReference>
<dbReference type="RefSeq" id="WP_006086204.1">
    <property type="nucleotide sequence ID" value="NC_009997.1"/>
</dbReference>
<dbReference type="SMR" id="A9L579"/>
<dbReference type="MEROPS" id="S51.001"/>
<dbReference type="GeneID" id="11772761"/>
<dbReference type="KEGG" id="sbn:Sbal195_2673"/>
<dbReference type="HOGENOM" id="CLU_071689_0_0_6"/>
<dbReference type="Proteomes" id="UP000000770">
    <property type="component" value="Chromosome"/>
</dbReference>
<dbReference type="GO" id="GO:0005737">
    <property type="term" value="C:cytoplasm"/>
    <property type="evidence" value="ECO:0007669"/>
    <property type="project" value="UniProtKB-SubCell"/>
</dbReference>
<dbReference type="GO" id="GO:0016805">
    <property type="term" value="F:dipeptidase activity"/>
    <property type="evidence" value="ECO:0007669"/>
    <property type="project" value="UniProtKB-UniRule"/>
</dbReference>
<dbReference type="GO" id="GO:0008236">
    <property type="term" value="F:serine-type peptidase activity"/>
    <property type="evidence" value="ECO:0007669"/>
    <property type="project" value="UniProtKB-KW"/>
</dbReference>
<dbReference type="GO" id="GO:0006508">
    <property type="term" value="P:proteolysis"/>
    <property type="evidence" value="ECO:0007669"/>
    <property type="project" value="UniProtKB-UniRule"/>
</dbReference>
<dbReference type="CDD" id="cd03146">
    <property type="entry name" value="GAT1_Peptidase_E"/>
    <property type="match status" value="1"/>
</dbReference>
<dbReference type="FunFam" id="3.40.50.880:FF:000007">
    <property type="entry name" value="Peptidase E"/>
    <property type="match status" value="1"/>
</dbReference>
<dbReference type="Gene3D" id="3.40.50.880">
    <property type="match status" value="1"/>
</dbReference>
<dbReference type="HAMAP" id="MF_00510">
    <property type="entry name" value="Peptidase_E"/>
    <property type="match status" value="1"/>
</dbReference>
<dbReference type="InterPro" id="IPR029062">
    <property type="entry name" value="Class_I_gatase-like"/>
</dbReference>
<dbReference type="InterPro" id="IPR005320">
    <property type="entry name" value="Peptidase_S51"/>
</dbReference>
<dbReference type="InterPro" id="IPR023172">
    <property type="entry name" value="Peptidase_S51_dipeptidase-E"/>
</dbReference>
<dbReference type="NCBIfam" id="NF003642">
    <property type="entry name" value="PRK05282.1"/>
    <property type="match status" value="1"/>
</dbReference>
<dbReference type="PANTHER" id="PTHR20842:SF0">
    <property type="entry name" value="ALPHA-ASPARTYL DIPEPTIDASE"/>
    <property type="match status" value="1"/>
</dbReference>
<dbReference type="PANTHER" id="PTHR20842">
    <property type="entry name" value="PROTEASE S51 ALPHA-ASPARTYL DIPEPTIDASE"/>
    <property type="match status" value="1"/>
</dbReference>
<dbReference type="Pfam" id="PF03575">
    <property type="entry name" value="Peptidase_S51"/>
    <property type="match status" value="1"/>
</dbReference>
<dbReference type="SUPFAM" id="SSF52317">
    <property type="entry name" value="Class I glutamine amidotransferase-like"/>
    <property type="match status" value="1"/>
</dbReference>
<reference key="1">
    <citation type="submission" date="2007-11" db="EMBL/GenBank/DDBJ databases">
        <title>Complete sequence of chromosome of Shewanella baltica OS195.</title>
        <authorList>
            <consortium name="US DOE Joint Genome Institute"/>
            <person name="Copeland A."/>
            <person name="Lucas S."/>
            <person name="Lapidus A."/>
            <person name="Barry K."/>
            <person name="Glavina del Rio T."/>
            <person name="Dalin E."/>
            <person name="Tice H."/>
            <person name="Pitluck S."/>
            <person name="Chain P."/>
            <person name="Malfatti S."/>
            <person name="Shin M."/>
            <person name="Vergez L."/>
            <person name="Schmutz J."/>
            <person name="Larimer F."/>
            <person name="Land M."/>
            <person name="Hauser L."/>
            <person name="Kyrpides N."/>
            <person name="Kim E."/>
            <person name="Brettar I."/>
            <person name="Rodrigues J."/>
            <person name="Konstantinidis K."/>
            <person name="Klappenbach J."/>
            <person name="Hofle M."/>
            <person name="Tiedje J."/>
            <person name="Richardson P."/>
        </authorList>
    </citation>
    <scope>NUCLEOTIDE SEQUENCE [LARGE SCALE GENOMIC DNA]</scope>
    <source>
        <strain>OS195</strain>
    </source>
</reference>
<evidence type="ECO:0000255" key="1">
    <source>
        <dbReference type="HAMAP-Rule" id="MF_00510"/>
    </source>
</evidence>
<feature type="chain" id="PRO_1000081588" description="Peptidase E">
    <location>
        <begin position="1"/>
        <end position="239"/>
    </location>
</feature>
<feature type="active site" description="Charge relay system" evidence="1">
    <location>
        <position position="122"/>
    </location>
</feature>
<feature type="active site" description="Charge relay system" evidence="1">
    <location>
        <position position="137"/>
    </location>
</feature>
<feature type="active site" description="Charge relay system" evidence="1">
    <location>
        <position position="159"/>
    </location>
</feature>
<comment type="function">
    <text evidence="1">Hydrolyzes dipeptides containing N-terminal aspartate residues. May play a role in allowing the cell to use peptide aspartate to spare carbon otherwise required for the synthesis of the aspartate family of amino acids.</text>
</comment>
<comment type="catalytic activity">
    <reaction evidence="1">
        <text>Dipeptidase E catalyzes the hydrolysis of dipeptides Asp-|-Xaa. It does not act on peptides with N-terminal Glu, Asn or Gln, nor does it cleave isoaspartyl peptides.</text>
        <dbReference type="EC" id="3.4.13.21"/>
    </reaction>
</comment>
<comment type="subcellular location">
    <subcellularLocation>
        <location evidence="1">Cytoplasm</location>
    </subcellularLocation>
</comment>
<comment type="similarity">
    <text evidence="1">Belongs to the peptidase S51 family.</text>
</comment>
<name>PEPE_SHEB9</name>
<accession>A9L579</accession>
<proteinExistence type="inferred from homology"/>
<protein>
    <recommendedName>
        <fullName evidence="1">Peptidase E</fullName>
        <ecNumber evidence="1">3.4.13.21</ecNumber>
    </recommendedName>
    <alternativeName>
        <fullName evidence="1">Alpha-aspartyl dipeptidase</fullName>
    </alternativeName>
    <alternativeName>
        <fullName evidence="1">Asp-specific dipeptidase</fullName>
    </alternativeName>
    <alternativeName>
        <fullName evidence="1">Dipeptidase E</fullName>
    </alternativeName>
</protein>
<organism>
    <name type="scientific">Shewanella baltica (strain OS195)</name>
    <dbReference type="NCBI Taxonomy" id="399599"/>
    <lineage>
        <taxon>Bacteria</taxon>
        <taxon>Pseudomonadati</taxon>
        <taxon>Pseudomonadota</taxon>
        <taxon>Gammaproteobacteria</taxon>
        <taxon>Alteromonadales</taxon>
        <taxon>Shewanellaceae</taxon>
        <taxon>Shewanella</taxon>
    </lineage>
</organism>
<gene>
    <name evidence="1" type="primary">pepE</name>
    <name type="ordered locus">Sbal195_2673</name>
</gene>
<sequence>MTINALLLSSSRVGDTPYLAHAIPFIKPLTTNARKWIFIPYAGVSMSYDTYLASVVTGLSGLELDISGIHQHPDPQQAIKDADGILIGGGNTFHLLHQLYRYDLVTLIGEQVALGKPYIGWSAGSNVSGLSIRTTNDMPIIEPPSFNALNLVPFQLNPHYSNYQAPGHNGETRAQRLLEFTKVDPLTPVVGIVEGSALWRQGDKLSLLGNQPAYLFCGEQQEIPIPVGSDLSNLLKPSL</sequence>